<feature type="chain" id="PRO_1000016127" description="Aspartyl/glutamyl-tRNA(Asn/Gln) amidotransferase subunit C">
    <location>
        <begin position="1"/>
        <end position="95"/>
    </location>
</feature>
<accession>A1WVR8</accession>
<sequence>MAIDADEVQQIAHLARIRIDEEAVSGYARDLTGILAFVEQMGNVDTDGVEPMAHPWDATQRLRPDEVTEPNLREHYQSGAPAVEAGLYLVPRVVE</sequence>
<proteinExistence type="inferred from homology"/>
<keyword id="KW-0067">ATP-binding</keyword>
<keyword id="KW-0436">Ligase</keyword>
<keyword id="KW-0547">Nucleotide-binding</keyword>
<keyword id="KW-0648">Protein biosynthesis</keyword>
<keyword id="KW-1185">Reference proteome</keyword>
<name>GATC_HALHL</name>
<protein>
    <recommendedName>
        <fullName evidence="1">Aspartyl/glutamyl-tRNA(Asn/Gln) amidotransferase subunit C</fullName>
        <shortName evidence="1">Asp/Glu-ADT subunit C</shortName>
        <ecNumber evidence="1">6.3.5.-</ecNumber>
    </recommendedName>
</protein>
<comment type="function">
    <text evidence="1">Allows the formation of correctly charged Asn-tRNA(Asn) or Gln-tRNA(Gln) through the transamidation of misacylated Asp-tRNA(Asn) or Glu-tRNA(Gln) in organisms which lack either or both of asparaginyl-tRNA or glutaminyl-tRNA synthetases. The reaction takes place in the presence of glutamine and ATP through an activated phospho-Asp-tRNA(Asn) or phospho-Glu-tRNA(Gln).</text>
</comment>
<comment type="catalytic activity">
    <reaction evidence="1">
        <text>L-glutamyl-tRNA(Gln) + L-glutamine + ATP + H2O = L-glutaminyl-tRNA(Gln) + L-glutamate + ADP + phosphate + H(+)</text>
        <dbReference type="Rhea" id="RHEA:17521"/>
        <dbReference type="Rhea" id="RHEA-COMP:9681"/>
        <dbReference type="Rhea" id="RHEA-COMP:9684"/>
        <dbReference type="ChEBI" id="CHEBI:15377"/>
        <dbReference type="ChEBI" id="CHEBI:15378"/>
        <dbReference type="ChEBI" id="CHEBI:29985"/>
        <dbReference type="ChEBI" id="CHEBI:30616"/>
        <dbReference type="ChEBI" id="CHEBI:43474"/>
        <dbReference type="ChEBI" id="CHEBI:58359"/>
        <dbReference type="ChEBI" id="CHEBI:78520"/>
        <dbReference type="ChEBI" id="CHEBI:78521"/>
        <dbReference type="ChEBI" id="CHEBI:456216"/>
    </reaction>
</comment>
<comment type="catalytic activity">
    <reaction evidence="1">
        <text>L-aspartyl-tRNA(Asn) + L-glutamine + ATP + H2O = L-asparaginyl-tRNA(Asn) + L-glutamate + ADP + phosphate + 2 H(+)</text>
        <dbReference type="Rhea" id="RHEA:14513"/>
        <dbReference type="Rhea" id="RHEA-COMP:9674"/>
        <dbReference type="Rhea" id="RHEA-COMP:9677"/>
        <dbReference type="ChEBI" id="CHEBI:15377"/>
        <dbReference type="ChEBI" id="CHEBI:15378"/>
        <dbReference type="ChEBI" id="CHEBI:29985"/>
        <dbReference type="ChEBI" id="CHEBI:30616"/>
        <dbReference type="ChEBI" id="CHEBI:43474"/>
        <dbReference type="ChEBI" id="CHEBI:58359"/>
        <dbReference type="ChEBI" id="CHEBI:78515"/>
        <dbReference type="ChEBI" id="CHEBI:78516"/>
        <dbReference type="ChEBI" id="CHEBI:456216"/>
    </reaction>
</comment>
<comment type="subunit">
    <text evidence="1">Heterotrimer of A, B and C subunits.</text>
</comment>
<comment type="similarity">
    <text evidence="1">Belongs to the GatC family.</text>
</comment>
<reference key="1">
    <citation type="submission" date="2006-12" db="EMBL/GenBank/DDBJ databases">
        <title>Complete sequence of Halorhodospira halophila SL1.</title>
        <authorList>
            <consortium name="US DOE Joint Genome Institute"/>
            <person name="Copeland A."/>
            <person name="Lucas S."/>
            <person name="Lapidus A."/>
            <person name="Barry K."/>
            <person name="Detter J.C."/>
            <person name="Glavina del Rio T."/>
            <person name="Hammon N."/>
            <person name="Israni S."/>
            <person name="Dalin E."/>
            <person name="Tice H."/>
            <person name="Pitluck S."/>
            <person name="Saunders E."/>
            <person name="Brettin T."/>
            <person name="Bruce D."/>
            <person name="Han C."/>
            <person name="Tapia R."/>
            <person name="Schmutz J."/>
            <person name="Larimer F."/>
            <person name="Land M."/>
            <person name="Hauser L."/>
            <person name="Kyrpides N."/>
            <person name="Mikhailova N."/>
            <person name="Hoff W."/>
            <person name="Richardson P."/>
        </authorList>
    </citation>
    <scope>NUCLEOTIDE SEQUENCE [LARGE SCALE GENOMIC DNA]</scope>
    <source>
        <strain>DSM 244 / SL1</strain>
    </source>
</reference>
<dbReference type="EC" id="6.3.5.-" evidence="1"/>
<dbReference type="EMBL" id="CP000544">
    <property type="protein sequence ID" value="ABM61780.1"/>
    <property type="molecule type" value="Genomic_DNA"/>
</dbReference>
<dbReference type="RefSeq" id="WP_011813803.1">
    <property type="nucleotide sequence ID" value="NC_008789.1"/>
</dbReference>
<dbReference type="SMR" id="A1WVR8"/>
<dbReference type="STRING" id="349124.Hhal_1004"/>
<dbReference type="KEGG" id="hha:Hhal_1004"/>
<dbReference type="eggNOG" id="COG0721">
    <property type="taxonomic scope" value="Bacteria"/>
</dbReference>
<dbReference type="HOGENOM" id="CLU_105899_2_2_6"/>
<dbReference type="OrthoDB" id="9794326at2"/>
<dbReference type="Proteomes" id="UP000000647">
    <property type="component" value="Chromosome"/>
</dbReference>
<dbReference type="GO" id="GO:0050566">
    <property type="term" value="F:asparaginyl-tRNA synthase (glutamine-hydrolyzing) activity"/>
    <property type="evidence" value="ECO:0007669"/>
    <property type="project" value="RHEA"/>
</dbReference>
<dbReference type="GO" id="GO:0005524">
    <property type="term" value="F:ATP binding"/>
    <property type="evidence" value="ECO:0007669"/>
    <property type="project" value="UniProtKB-KW"/>
</dbReference>
<dbReference type="GO" id="GO:0050567">
    <property type="term" value="F:glutaminyl-tRNA synthase (glutamine-hydrolyzing) activity"/>
    <property type="evidence" value="ECO:0007669"/>
    <property type="project" value="UniProtKB-UniRule"/>
</dbReference>
<dbReference type="GO" id="GO:0070681">
    <property type="term" value="P:glutaminyl-tRNAGln biosynthesis via transamidation"/>
    <property type="evidence" value="ECO:0007669"/>
    <property type="project" value="TreeGrafter"/>
</dbReference>
<dbReference type="GO" id="GO:0006450">
    <property type="term" value="P:regulation of translational fidelity"/>
    <property type="evidence" value="ECO:0007669"/>
    <property type="project" value="InterPro"/>
</dbReference>
<dbReference type="GO" id="GO:0006412">
    <property type="term" value="P:translation"/>
    <property type="evidence" value="ECO:0007669"/>
    <property type="project" value="UniProtKB-UniRule"/>
</dbReference>
<dbReference type="Gene3D" id="1.10.20.60">
    <property type="entry name" value="Glu-tRNAGln amidotransferase C subunit, N-terminal domain"/>
    <property type="match status" value="1"/>
</dbReference>
<dbReference type="HAMAP" id="MF_00122">
    <property type="entry name" value="GatC"/>
    <property type="match status" value="1"/>
</dbReference>
<dbReference type="InterPro" id="IPR036113">
    <property type="entry name" value="Asp/Glu-ADT_sf_sub_c"/>
</dbReference>
<dbReference type="InterPro" id="IPR003837">
    <property type="entry name" value="GatC"/>
</dbReference>
<dbReference type="NCBIfam" id="TIGR00135">
    <property type="entry name" value="gatC"/>
    <property type="match status" value="1"/>
</dbReference>
<dbReference type="PANTHER" id="PTHR15004">
    <property type="entry name" value="GLUTAMYL-TRNA(GLN) AMIDOTRANSFERASE SUBUNIT C, MITOCHONDRIAL"/>
    <property type="match status" value="1"/>
</dbReference>
<dbReference type="PANTHER" id="PTHR15004:SF0">
    <property type="entry name" value="GLUTAMYL-TRNA(GLN) AMIDOTRANSFERASE SUBUNIT C, MITOCHONDRIAL"/>
    <property type="match status" value="1"/>
</dbReference>
<dbReference type="Pfam" id="PF02686">
    <property type="entry name" value="GatC"/>
    <property type="match status" value="1"/>
</dbReference>
<dbReference type="SUPFAM" id="SSF141000">
    <property type="entry name" value="Glu-tRNAGln amidotransferase C subunit"/>
    <property type="match status" value="1"/>
</dbReference>
<evidence type="ECO:0000255" key="1">
    <source>
        <dbReference type="HAMAP-Rule" id="MF_00122"/>
    </source>
</evidence>
<gene>
    <name evidence="1" type="primary">gatC</name>
    <name type="ordered locus">Hhal_1004</name>
</gene>
<organism>
    <name type="scientific">Halorhodospira halophila (strain DSM 244 / SL1)</name>
    <name type="common">Ectothiorhodospira halophila (strain DSM 244 / SL1)</name>
    <dbReference type="NCBI Taxonomy" id="349124"/>
    <lineage>
        <taxon>Bacteria</taxon>
        <taxon>Pseudomonadati</taxon>
        <taxon>Pseudomonadota</taxon>
        <taxon>Gammaproteobacteria</taxon>
        <taxon>Chromatiales</taxon>
        <taxon>Ectothiorhodospiraceae</taxon>
        <taxon>Halorhodospira</taxon>
    </lineage>
</organism>